<gene>
    <name type="primary">tdrd3</name>
    <name type="ORF">zgc:77174</name>
</gene>
<comment type="function">
    <text evidence="2">Scaffolding protein that specifically recognizes and binds dimethylarginine-containing proteins. Plays a role in the regulation of translation of target mRNAs by binding Arg/Gly-rich motifs (GAR) in dimethylarginine-containing proteins. In nucleus, acts as a coactivator: recognizes and binds asymmetric dimethylation on the core histone tails associated with transcriptional activation (H3R17me2a and H4R3me2a) and recruits proteins at these arginine-methylated loci. In cytoplasm, acts as an antiviral factor that participates in the assembly of stress granules together with G3BP1.</text>
</comment>
<comment type="subunit">
    <text evidence="2">Component of mRNA stress granules.</text>
</comment>
<comment type="subcellular location">
    <subcellularLocation>
        <location evidence="2">Cytoplasm</location>
    </subcellularLocation>
    <subcellularLocation>
        <location evidence="2">Nucleus</location>
    </subcellularLocation>
    <text evidence="2">Predominantly cytoplasmic. Associated with actively translating polyribosomes. Component of stress granules.</text>
</comment>
<comment type="domain">
    <text evidence="1">The Tudor domain specifically recognizes and binds asymmetric dimethylation of histone H3 'Arg-17' (H3R17me2a) and histones H4 'Arg-3', 2 tags for epigenetic transcriptional activation.</text>
</comment>
<organism>
    <name type="scientific">Danio rerio</name>
    <name type="common">Zebrafish</name>
    <name type="synonym">Brachydanio rerio</name>
    <dbReference type="NCBI Taxonomy" id="7955"/>
    <lineage>
        <taxon>Eukaryota</taxon>
        <taxon>Metazoa</taxon>
        <taxon>Chordata</taxon>
        <taxon>Craniata</taxon>
        <taxon>Vertebrata</taxon>
        <taxon>Euteleostomi</taxon>
        <taxon>Actinopterygii</taxon>
        <taxon>Neopterygii</taxon>
        <taxon>Teleostei</taxon>
        <taxon>Ostariophysi</taxon>
        <taxon>Cypriniformes</taxon>
        <taxon>Danionidae</taxon>
        <taxon>Danioninae</taxon>
        <taxon>Danio</taxon>
    </lineage>
</organism>
<dbReference type="EMBL" id="BC066604">
    <property type="protein sequence ID" value="AAH66604.1"/>
    <property type="molecule type" value="mRNA"/>
</dbReference>
<dbReference type="SMR" id="Q6NYG6"/>
<dbReference type="FunCoup" id="Q6NYG6">
    <property type="interactions" value="3210"/>
</dbReference>
<dbReference type="STRING" id="7955.ENSDARP00000149904"/>
<dbReference type="PaxDb" id="7955-ENSDARP00000030883"/>
<dbReference type="PeptideAtlas" id="Q6NYG6"/>
<dbReference type="AGR" id="ZFIN:ZDB-GENE-040426-19"/>
<dbReference type="ZFIN" id="ZDB-GENE-040426-19">
    <property type="gene designation" value="tdrd3"/>
</dbReference>
<dbReference type="eggNOG" id="KOG3683">
    <property type="taxonomic scope" value="Eukaryota"/>
</dbReference>
<dbReference type="InParanoid" id="Q6NYG6"/>
<dbReference type="PhylomeDB" id="Q6NYG6"/>
<dbReference type="PRO" id="PR:Q6NYG6"/>
<dbReference type="Proteomes" id="UP000000437">
    <property type="component" value="Unplaced"/>
</dbReference>
<dbReference type="GO" id="GO:0005737">
    <property type="term" value="C:cytoplasm"/>
    <property type="evidence" value="ECO:0007669"/>
    <property type="project" value="UniProtKB-SubCell"/>
</dbReference>
<dbReference type="GO" id="GO:0005634">
    <property type="term" value="C:nucleus"/>
    <property type="evidence" value="ECO:0000250"/>
    <property type="project" value="UniProtKB"/>
</dbReference>
<dbReference type="GO" id="GO:0003682">
    <property type="term" value="F:chromatin binding"/>
    <property type="evidence" value="ECO:0000250"/>
    <property type="project" value="UniProtKB"/>
</dbReference>
<dbReference type="GO" id="GO:0140006">
    <property type="term" value="F:histone H3 reader activity"/>
    <property type="evidence" value="ECO:0000250"/>
    <property type="project" value="UniProtKB"/>
</dbReference>
<dbReference type="GO" id="GO:0003713">
    <property type="term" value="F:transcription coactivator activity"/>
    <property type="evidence" value="ECO:0000250"/>
    <property type="project" value="UniProtKB"/>
</dbReference>
<dbReference type="CDD" id="cd20413">
    <property type="entry name" value="Tudor_TDRD3"/>
    <property type="match status" value="1"/>
</dbReference>
<dbReference type="CDD" id="cd14282">
    <property type="entry name" value="UBA_TDRD3"/>
    <property type="match status" value="1"/>
</dbReference>
<dbReference type="FunFam" id="2.40.50.770:FF:000001">
    <property type="entry name" value="Tudor domain-containing protein 3"/>
    <property type="match status" value="1"/>
</dbReference>
<dbReference type="Gene3D" id="2.30.30.140">
    <property type="match status" value="1"/>
</dbReference>
<dbReference type="Gene3D" id="1.10.8.10">
    <property type="entry name" value="DNA helicase RuvA subunit, C-terminal domain"/>
    <property type="match status" value="1"/>
</dbReference>
<dbReference type="Gene3D" id="2.40.50.770">
    <property type="entry name" value="RecQ-mediated genome instability protein Rmi1, C-terminal domain"/>
    <property type="match status" value="1"/>
</dbReference>
<dbReference type="InterPro" id="IPR042470">
    <property type="entry name" value="RMI1_N_C_sf"/>
</dbReference>
<dbReference type="InterPro" id="IPR013894">
    <property type="entry name" value="RMI1_OB"/>
</dbReference>
<dbReference type="InterPro" id="IPR002999">
    <property type="entry name" value="Tudor"/>
</dbReference>
<dbReference type="InterPro" id="IPR047379">
    <property type="entry name" value="Tudor_TDRD3"/>
</dbReference>
<dbReference type="InterPro" id="IPR015940">
    <property type="entry name" value="UBA"/>
</dbReference>
<dbReference type="InterPro" id="IPR009060">
    <property type="entry name" value="UBA-like_sf"/>
</dbReference>
<dbReference type="InterPro" id="IPR041915">
    <property type="entry name" value="UBA_TDRD3"/>
</dbReference>
<dbReference type="PANTHER" id="PTHR13681">
    <property type="entry name" value="SURVIVAL OF MOTOR NEURON-RELATED-SPLICING FACTOR 30-RELATED"/>
    <property type="match status" value="1"/>
</dbReference>
<dbReference type="PANTHER" id="PTHR13681:SF24">
    <property type="entry name" value="TUDOR DOMAIN-CONTAINING PROTEIN 3"/>
    <property type="match status" value="1"/>
</dbReference>
<dbReference type="Pfam" id="PF08585">
    <property type="entry name" value="RMI1_N_C"/>
    <property type="match status" value="1"/>
</dbReference>
<dbReference type="Pfam" id="PF00567">
    <property type="entry name" value="TUDOR"/>
    <property type="match status" value="1"/>
</dbReference>
<dbReference type="Pfam" id="PF22562">
    <property type="entry name" value="UBA_7"/>
    <property type="match status" value="1"/>
</dbReference>
<dbReference type="SMART" id="SM01161">
    <property type="entry name" value="DUF1767"/>
    <property type="match status" value="1"/>
</dbReference>
<dbReference type="SMART" id="SM00333">
    <property type="entry name" value="TUDOR"/>
    <property type="match status" value="1"/>
</dbReference>
<dbReference type="SMART" id="SM00165">
    <property type="entry name" value="UBA"/>
    <property type="match status" value="1"/>
</dbReference>
<dbReference type="SUPFAM" id="SSF63748">
    <property type="entry name" value="Tudor/PWWP/MBT"/>
    <property type="match status" value="1"/>
</dbReference>
<dbReference type="SUPFAM" id="SSF46934">
    <property type="entry name" value="UBA-like"/>
    <property type="match status" value="1"/>
</dbReference>
<dbReference type="PROSITE" id="PS50304">
    <property type="entry name" value="TUDOR"/>
    <property type="match status" value="1"/>
</dbReference>
<dbReference type="PROSITE" id="PS50030">
    <property type="entry name" value="UBA"/>
    <property type="match status" value="1"/>
</dbReference>
<accession>Q6NYG6</accession>
<name>TDRD3_DANRE</name>
<reference key="1">
    <citation type="submission" date="2004-02" db="EMBL/GenBank/DDBJ databases">
        <authorList>
            <consortium name="NIH - Zebrafish Gene Collection (ZGC) project"/>
        </authorList>
    </citation>
    <scope>NUCLEOTIDE SEQUENCE [LARGE SCALE MRNA]</scope>
    <source>
        <tissue>Kidney</tissue>
    </source>
</reference>
<proteinExistence type="evidence at transcript level"/>
<protein>
    <recommendedName>
        <fullName>Tudor domain-containing protein 3</fullName>
    </recommendedName>
</protein>
<keyword id="KW-0156">Chromatin regulator</keyword>
<keyword id="KW-0963">Cytoplasm</keyword>
<keyword id="KW-0539">Nucleus</keyword>
<keyword id="KW-1185">Reference proteome</keyword>
<evidence type="ECO:0000250" key="1"/>
<evidence type="ECO:0000250" key="2">
    <source>
        <dbReference type="UniProtKB" id="Q9H7E2"/>
    </source>
</evidence>
<evidence type="ECO:0000255" key="3">
    <source>
        <dbReference type="PROSITE-ProRule" id="PRU00211"/>
    </source>
</evidence>
<evidence type="ECO:0000255" key="4">
    <source>
        <dbReference type="PROSITE-ProRule" id="PRU00212"/>
    </source>
</evidence>
<evidence type="ECO:0000256" key="5">
    <source>
        <dbReference type="SAM" id="MobiDB-lite"/>
    </source>
</evidence>
<feature type="chain" id="PRO_0000367248" description="Tudor domain-containing protein 3">
    <location>
        <begin position="1"/>
        <end position="733"/>
    </location>
</feature>
<feature type="domain" description="UBA" evidence="4">
    <location>
        <begin position="290"/>
        <end position="330"/>
    </location>
</feature>
<feature type="domain" description="Tudor" evidence="3">
    <location>
        <begin position="639"/>
        <end position="699"/>
    </location>
</feature>
<feature type="region of interest" description="Disordered" evidence="5">
    <location>
        <begin position="241"/>
        <end position="281"/>
    </location>
</feature>
<feature type="region of interest" description="Disordered" evidence="5">
    <location>
        <begin position="333"/>
        <end position="630"/>
    </location>
</feature>
<feature type="region of interest" description="Disordered" evidence="5">
    <location>
        <begin position="706"/>
        <end position="733"/>
    </location>
</feature>
<feature type="compositionally biased region" description="Basic and acidic residues" evidence="5">
    <location>
        <begin position="262"/>
        <end position="281"/>
    </location>
</feature>
<feature type="compositionally biased region" description="Basic residues" evidence="5">
    <location>
        <begin position="346"/>
        <end position="355"/>
    </location>
</feature>
<feature type="compositionally biased region" description="Polar residues" evidence="5">
    <location>
        <begin position="392"/>
        <end position="408"/>
    </location>
</feature>
<feature type="compositionally biased region" description="Basic and acidic residues" evidence="5">
    <location>
        <begin position="420"/>
        <end position="441"/>
    </location>
</feature>
<feature type="compositionally biased region" description="Polar residues" evidence="5">
    <location>
        <begin position="446"/>
        <end position="455"/>
    </location>
</feature>
<feature type="compositionally biased region" description="Basic and acidic residues" evidence="5">
    <location>
        <begin position="456"/>
        <end position="478"/>
    </location>
</feature>
<feature type="compositionally biased region" description="Polar residues" evidence="5">
    <location>
        <begin position="484"/>
        <end position="499"/>
    </location>
</feature>
<feature type="compositionally biased region" description="Basic and acidic residues" evidence="5">
    <location>
        <begin position="559"/>
        <end position="570"/>
    </location>
</feature>
<feature type="compositionally biased region" description="Basic and acidic residues" evidence="5">
    <location>
        <begin position="706"/>
        <end position="716"/>
    </location>
</feature>
<sequence length="733" mass="81779">MCDLSSALIKEGWYLTDEGIEECKSSSEKEKTSPTDIIQVALNNDLRPIGKSFLPADINSGRIEKLEGPCVLQVQKIRNVAASKDHEESQAAPRMLRVQMTDGHTACTGLEFKQLSKISLNTPPGTKVKLLGVVQVKNGILLLDDSKIAVLGGEVDHMIEKWEFQRSLAKHSRRNIGAEGGPPPFVPFGQKCVHKEQVDSRALDQRKTLQSTNAVKSADDNDEFEKQRTAAIAEVAKSKETRTFGGGGNAGGNLANPGSSYKSRDTYQRKREEREKPWTENKSDGVYRDLVDERALRDIMEMGFNREAARQALLDNNNNLEVALNLLLTRANQPRAAPVEQSRPPPRGKGRGKGRSRQDEDEEAGGRPSGPSTLFDFLESKMGTFSIDDSKPSQQDHQTKMNFSNSDQMSRDAGQFKPPPRNDGRSQRNDRPPRFQKDGDFPKPTPASSSFSQPQKWRDGERTGRGGGPERWKNESQDARNAPVSYSSSFSKSREQQGASGKELNKEQDGTGPASFRKIQSNGPAPPKFSTPADPKMRNEPNNRRKGRPERPNSGYFEHSQDALGKKDFQDEGQFVKVGPVSNTPLPNGDLEHRRTGPIKPHFSAPPPRQTNMHNPASKRRSGPIKGPRDSVDINNFVNWKAGDQCLALYWEDNKFYRARIDAVHPSGSTAVVVFSDYGNCEEVLLDSIKPLHMDDDEDVYYENSLEFRRGGDGQPRRSRPTQQYYQPPRARD</sequence>